<dbReference type="EC" id="2.4.99.17" evidence="1"/>
<dbReference type="EMBL" id="AE003849">
    <property type="protein sequence ID" value="AAF84123.1"/>
    <property type="molecule type" value="Genomic_DNA"/>
</dbReference>
<dbReference type="PIR" id="C82697">
    <property type="entry name" value="C82697"/>
</dbReference>
<dbReference type="SMR" id="Q9PDR5"/>
<dbReference type="STRING" id="160492.XF_1314"/>
<dbReference type="KEGG" id="xfa:XF_1314"/>
<dbReference type="eggNOG" id="COG0809">
    <property type="taxonomic scope" value="Bacteria"/>
</dbReference>
<dbReference type="HOGENOM" id="CLU_039110_1_0_6"/>
<dbReference type="UniPathway" id="UPA00392"/>
<dbReference type="Proteomes" id="UP000000812">
    <property type="component" value="Chromosome"/>
</dbReference>
<dbReference type="GO" id="GO:0005737">
    <property type="term" value="C:cytoplasm"/>
    <property type="evidence" value="ECO:0007669"/>
    <property type="project" value="UniProtKB-SubCell"/>
</dbReference>
<dbReference type="GO" id="GO:0051075">
    <property type="term" value="F:S-adenosylmethionine:tRNA ribosyltransferase-isomerase activity"/>
    <property type="evidence" value="ECO:0007669"/>
    <property type="project" value="UniProtKB-EC"/>
</dbReference>
<dbReference type="GO" id="GO:0008616">
    <property type="term" value="P:queuosine biosynthetic process"/>
    <property type="evidence" value="ECO:0007669"/>
    <property type="project" value="UniProtKB-UniRule"/>
</dbReference>
<dbReference type="GO" id="GO:0002099">
    <property type="term" value="P:tRNA wobble guanine modification"/>
    <property type="evidence" value="ECO:0007669"/>
    <property type="project" value="TreeGrafter"/>
</dbReference>
<dbReference type="FunFam" id="3.40.1780.10:FF:000001">
    <property type="entry name" value="S-adenosylmethionine:tRNA ribosyltransferase-isomerase"/>
    <property type="match status" value="1"/>
</dbReference>
<dbReference type="Gene3D" id="2.40.10.240">
    <property type="entry name" value="QueA-like"/>
    <property type="match status" value="1"/>
</dbReference>
<dbReference type="Gene3D" id="3.40.1780.10">
    <property type="entry name" value="QueA-like"/>
    <property type="match status" value="1"/>
</dbReference>
<dbReference type="HAMAP" id="MF_00113">
    <property type="entry name" value="QueA"/>
    <property type="match status" value="1"/>
</dbReference>
<dbReference type="InterPro" id="IPR003699">
    <property type="entry name" value="QueA"/>
</dbReference>
<dbReference type="InterPro" id="IPR042118">
    <property type="entry name" value="QueA_dom1"/>
</dbReference>
<dbReference type="InterPro" id="IPR042119">
    <property type="entry name" value="QueA_dom2"/>
</dbReference>
<dbReference type="InterPro" id="IPR036100">
    <property type="entry name" value="QueA_sf"/>
</dbReference>
<dbReference type="NCBIfam" id="NF001140">
    <property type="entry name" value="PRK00147.1"/>
    <property type="match status" value="1"/>
</dbReference>
<dbReference type="NCBIfam" id="TIGR00113">
    <property type="entry name" value="queA"/>
    <property type="match status" value="1"/>
</dbReference>
<dbReference type="PANTHER" id="PTHR30307">
    <property type="entry name" value="S-ADENOSYLMETHIONINE:TRNA RIBOSYLTRANSFERASE-ISOMERASE"/>
    <property type="match status" value="1"/>
</dbReference>
<dbReference type="PANTHER" id="PTHR30307:SF0">
    <property type="entry name" value="S-ADENOSYLMETHIONINE:TRNA RIBOSYLTRANSFERASE-ISOMERASE"/>
    <property type="match status" value="1"/>
</dbReference>
<dbReference type="Pfam" id="PF02547">
    <property type="entry name" value="Queuosine_synth"/>
    <property type="match status" value="1"/>
</dbReference>
<dbReference type="SUPFAM" id="SSF111337">
    <property type="entry name" value="QueA-like"/>
    <property type="match status" value="1"/>
</dbReference>
<protein>
    <recommendedName>
        <fullName evidence="1">S-adenosylmethionine:tRNA ribosyltransferase-isomerase</fullName>
        <ecNumber evidence="1">2.4.99.17</ecNumber>
    </recommendedName>
    <alternativeName>
        <fullName evidence="1">Queuosine biosynthesis protein QueA</fullName>
    </alternativeName>
</protein>
<comment type="function">
    <text evidence="1">Transfers and isomerizes the ribose moiety from AdoMet to the 7-aminomethyl group of 7-deazaguanine (preQ1-tRNA) to give epoxyqueuosine (oQ-tRNA).</text>
</comment>
<comment type="catalytic activity">
    <reaction evidence="1">
        <text>7-aminomethyl-7-carbaguanosine(34) in tRNA + S-adenosyl-L-methionine = epoxyqueuosine(34) in tRNA + adenine + L-methionine + 2 H(+)</text>
        <dbReference type="Rhea" id="RHEA:32155"/>
        <dbReference type="Rhea" id="RHEA-COMP:10342"/>
        <dbReference type="Rhea" id="RHEA-COMP:18582"/>
        <dbReference type="ChEBI" id="CHEBI:15378"/>
        <dbReference type="ChEBI" id="CHEBI:16708"/>
        <dbReference type="ChEBI" id="CHEBI:57844"/>
        <dbReference type="ChEBI" id="CHEBI:59789"/>
        <dbReference type="ChEBI" id="CHEBI:82833"/>
        <dbReference type="ChEBI" id="CHEBI:194443"/>
        <dbReference type="EC" id="2.4.99.17"/>
    </reaction>
</comment>
<comment type="pathway">
    <text evidence="1">tRNA modification; tRNA-queuosine biosynthesis.</text>
</comment>
<comment type="subunit">
    <text evidence="1">Monomer.</text>
</comment>
<comment type="subcellular location">
    <subcellularLocation>
        <location evidence="1">Cytoplasm</location>
    </subcellularLocation>
</comment>
<comment type="similarity">
    <text evidence="1">Belongs to the QueA family.</text>
</comment>
<feature type="chain" id="PRO_0000165466" description="S-adenosylmethionine:tRNA ribosyltransferase-isomerase">
    <location>
        <begin position="1"/>
        <end position="347"/>
    </location>
</feature>
<proteinExistence type="inferred from homology"/>
<keyword id="KW-0963">Cytoplasm</keyword>
<keyword id="KW-0671">Queuosine biosynthesis</keyword>
<keyword id="KW-0949">S-adenosyl-L-methionine</keyword>
<keyword id="KW-0808">Transferase</keyword>
<evidence type="ECO:0000255" key="1">
    <source>
        <dbReference type="HAMAP-Rule" id="MF_00113"/>
    </source>
</evidence>
<reference key="1">
    <citation type="journal article" date="2000" name="Nature">
        <title>The genome sequence of the plant pathogen Xylella fastidiosa.</title>
        <authorList>
            <person name="Simpson A.J.G."/>
            <person name="Reinach F.C."/>
            <person name="Arruda P."/>
            <person name="Abreu F.A."/>
            <person name="Acencio M."/>
            <person name="Alvarenga R."/>
            <person name="Alves L.M.C."/>
            <person name="Araya J.E."/>
            <person name="Baia G.S."/>
            <person name="Baptista C.S."/>
            <person name="Barros M.H."/>
            <person name="Bonaccorsi E.D."/>
            <person name="Bordin S."/>
            <person name="Bove J.M."/>
            <person name="Briones M.R.S."/>
            <person name="Bueno M.R.P."/>
            <person name="Camargo A.A."/>
            <person name="Camargo L.E.A."/>
            <person name="Carraro D.M."/>
            <person name="Carrer H."/>
            <person name="Colauto N.B."/>
            <person name="Colombo C."/>
            <person name="Costa F.F."/>
            <person name="Costa M.C.R."/>
            <person name="Costa-Neto C.M."/>
            <person name="Coutinho L.L."/>
            <person name="Cristofani M."/>
            <person name="Dias-Neto E."/>
            <person name="Docena C."/>
            <person name="El-Dorry H."/>
            <person name="Facincani A.P."/>
            <person name="Ferreira A.J.S."/>
            <person name="Ferreira V.C.A."/>
            <person name="Ferro J.A."/>
            <person name="Fraga J.S."/>
            <person name="Franca S.C."/>
            <person name="Franco M.C."/>
            <person name="Frohme M."/>
            <person name="Furlan L.R."/>
            <person name="Garnier M."/>
            <person name="Goldman G.H."/>
            <person name="Goldman M.H.S."/>
            <person name="Gomes S.L."/>
            <person name="Gruber A."/>
            <person name="Ho P.L."/>
            <person name="Hoheisel J.D."/>
            <person name="Junqueira M.L."/>
            <person name="Kemper E.L."/>
            <person name="Kitajima J.P."/>
            <person name="Krieger J.E."/>
            <person name="Kuramae E.E."/>
            <person name="Laigret F."/>
            <person name="Lambais M.R."/>
            <person name="Leite L.C.C."/>
            <person name="Lemos E.G.M."/>
            <person name="Lemos M.V.F."/>
            <person name="Lopes S.A."/>
            <person name="Lopes C.R."/>
            <person name="Machado J.A."/>
            <person name="Machado M.A."/>
            <person name="Madeira A.M.B.N."/>
            <person name="Madeira H.M.F."/>
            <person name="Marino C.L."/>
            <person name="Marques M.V."/>
            <person name="Martins E.A.L."/>
            <person name="Martins E.M.F."/>
            <person name="Matsukuma A.Y."/>
            <person name="Menck C.F.M."/>
            <person name="Miracca E.C."/>
            <person name="Miyaki C.Y."/>
            <person name="Monteiro-Vitorello C.B."/>
            <person name="Moon D.H."/>
            <person name="Nagai M.A."/>
            <person name="Nascimento A.L.T.O."/>
            <person name="Netto L.E.S."/>
            <person name="Nhani A. Jr."/>
            <person name="Nobrega F.G."/>
            <person name="Nunes L.R."/>
            <person name="Oliveira M.A."/>
            <person name="de Oliveira M.C."/>
            <person name="de Oliveira R.C."/>
            <person name="Palmieri D.A."/>
            <person name="Paris A."/>
            <person name="Peixoto B.R."/>
            <person name="Pereira G.A.G."/>
            <person name="Pereira H.A. Jr."/>
            <person name="Pesquero J.B."/>
            <person name="Quaggio R.B."/>
            <person name="Roberto P.G."/>
            <person name="Rodrigues V."/>
            <person name="de Rosa A.J.M."/>
            <person name="de Rosa V.E. Jr."/>
            <person name="de Sa R.G."/>
            <person name="Santelli R.V."/>
            <person name="Sawasaki H.E."/>
            <person name="da Silva A.C.R."/>
            <person name="da Silva A.M."/>
            <person name="da Silva F.R."/>
            <person name="Silva W.A. Jr."/>
            <person name="da Silveira J.F."/>
            <person name="Silvestri M.L.Z."/>
            <person name="Siqueira W.J."/>
            <person name="de Souza A.A."/>
            <person name="de Souza A.P."/>
            <person name="Terenzi M.F."/>
            <person name="Truffi D."/>
            <person name="Tsai S.M."/>
            <person name="Tsuhako M.H."/>
            <person name="Vallada H."/>
            <person name="Van Sluys M.A."/>
            <person name="Verjovski-Almeida S."/>
            <person name="Vettore A.L."/>
            <person name="Zago M.A."/>
            <person name="Zatz M."/>
            <person name="Meidanis J."/>
            <person name="Setubal J.C."/>
        </authorList>
    </citation>
    <scope>NUCLEOTIDE SEQUENCE [LARGE SCALE GENOMIC DNA]</scope>
    <source>
        <strain>9a5c</strain>
    </source>
</reference>
<gene>
    <name evidence="1" type="primary">queA</name>
    <name type="ordered locus">XF_1314</name>
</gene>
<accession>Q9PDR5</accession>
<name>QUEA_XYLFA</name>
<sequence>MLKKSDFHYDLPEELIAQGPLPERSASRLMLVPSAPEQFQDCYVRDLPELLQPGDLLVFNDTRVIPARLFGRKVSGGRVEILIERFLGTHQAVVQLRTSRSLKVGNRILLDAGGHAGVLGRDGDFYLLSFDVESPLEQWLSDVGQLPLPPYIHREPDEYDRERYQTVFARAVGAVAAPTAGLHFDESLLARLRARGVEFGYITLHVGAGTFQPVRVALLQQHVMHSEWFKVGAELVEQVRSARARGGRVIAVGTTVVRSLESAMRHGELQPFVGETQIFIFPGYCIRSVDAMVTNFHLPESTLLMLVAAFAGRTRILDAYYHAVQQRYRFFSYGDAMLLFPRNAGEQ</sequence>
<organism>
    <name type="scientific">Xylella fastidiosa (strain 9a5c)</name>
    <dbReference type="NCBI Taxonomy" id="160492"/>
    <lineage>
        <taxon>Bacteria</taxon>
        <taxon>Pseudomonadati</taxon>
        <taxon>Pseudomonadota</taxon>
        <taxon>Gammaproteobacteria</taxon>
        <taxon>Lysobacterales</taxon>
        <taxon>Lysobacteraceae</taxon>
        <taxon>Xylella</taxon>
    </lineage>
</organism>